<accession>Q3B151</accession>
<reference key="1">
    <citation type="submission" date="2005-08" db="EMBL/GenBank/DDBJ databases">
        <title>Complete sequence of Pelodictyon luteolum DSM 273.</title>
        <authorList>
            <consortium name="US DOE Joint Genome Institute"/>
            <person name="Copeland A."/>
            <person name="Lucas S."/>
            <person name="Lapidus A."/>
            <person name="Barry K."/>
            <person name="Detter J.C."/>
            <person name="Glavina T."/>
            <person name="Hammon N."/>
            <person name="Israni S."/>
            <person name="Pitluck S."/>
            <person name="Bryant D."/>
            <person name="Schmutz J."/>
            <person name="Larimer F."/>
            <person name="Land M."/>
            <person name="Kyrpides N."/>
            <person name="Ivanova N."/>
            <person name="Richardson P."/>
        </authorList>
    </citation>
    <scope>NUCLEOTIDE SEQUENCE [LARGE SCALE GENOMIC DNA]</scope>
    <source>
        <strain>DSM 273 / BCRC 81028 / 2530</strain>
    </source>
</reference>
<name>TAL_CHLL3</name>
<evidence type="ECO:0000255" key="1">
    <source>
        <dbReference type="HAMAP-Rule" id="MF_00494"/>
    </source>
</evidence>
<feature type="chain" id="PRO_1000126339" description="Probable transaldolase">
    <location>
        <begin position="1"/>
        <end position="222"/>
    </location>
</feature>
<feature type="active site" description="Schiff-base intermediate with substrate" evidence="1">
    <location>
        <position position="91"/>
    </location>
</feature>
<organism>
    <name type="scientific">Chlorobium luteolum (strain DSM 273 / BCRC 81028 / 2530)</name>
    <name type="common">Pelodictyon luteolum</name>
    <dbReference type="NCBI Taxonomy" id="319225"/>
    <lineage>
        <taxon>Bacteria</taxon>
        <taxon>Pseudomonadati</taxon>
        <taxon>Chlorobiota</taxon>
        <taxon>Chlorobiia</taxon>
        <taxon>Chlorobiales</taxon>
        <taxon>Chlorobiaceae</taxon>
        <taxon>Chlorobium/Pelodictyon group</taxon>
        <taxon>Pelodictyon</taxon>
    </lineage>
</organism>
<dbReference type="EC" id="2.2.1.2" evidence="1"/>
<dbReference type="EMBL" id="CP000096">
    <property type="protein sequence ID" value="ABB24930.1"/>
    <property type="molecule type" value="Genomic_DNA"/>
</dbReference>
<dbReference type="RefSeq" id="WP_011358800.1">
    <property type="nucleotide sequence ID" value="NC_007512.1"/>
</dbReference>
<dbReference type="SMR" id="Q3B151"/>
<dbReference type="STRING" id="319225.Plut_2088"/>
<dbReference type="KEGG" id="plt:Plut_2088"/>
<dbReference type="eggNOG" id="COG0176">
    <property type="taxonomic scope" value="Bacteria"/>
</dbReference>
<dbReference type="HOGENOM" id="CLU_079764_0_0_10"/>
<dbReference type="OrthoDB" id="9807051at2"/>
<dbReference type="UniPathway" id="UPA00115">
    <property type="reaction ID" value="UER00414"/>
</dbReference>
<dbReference type="Proteomes" id="UP000002709">
    <property type="component" value="Chromosome"/>
</dbReference>
<dbReference type="GO" id="GO:0005737">
    <property type="term" value="C:cytoplasm"/>
    <property type="evidence" value="ECO:0007669"/>
    <property type="project" value="UniProtKB-SubCell"/>
</dbReference>
<dbReference type="GO" id="GO:0016832">
    <property type="term" value="F:aldehyde-lyase activity"/>
    <property type="evidence" value="ECO:0007669"/>
    <property type="project" value="InterPro"/>
</dbReference>
<dbReference type="GO" id="GO:0004801">
    <property type="term" value="F:transaldolase activity"/>
    <property type="evidence" value="ECO:0007669"/>
    <property type="project" value="UniProtKB-UniRule"/>
</dbReference>
<dbReference type="GO" id="GO:0005975">
    <property type="term" value="P:carbohydrate metabolic process"/>
    <property type="evidence" value="ECO:0007669"/>
    <property type="project" value="InterPro"/>
</dbReference>
<dbReference type="GO" id="GO:0006098">
    <property type="term" value="P:pentose-phosphate shunt"/>
    <property type="evidence" value="ECO:0007669"/>
    <property type="project" value="UniProtKB-UniRule"/>
</dbReference>
<dbReference type="CDD" id="cd00956">
    <property type="entry name" value="Transaldolase_FSA"/>
    <property type="match status" value="1"/>
</dbReference>
<dbReference type="FunFam" id="3.20.20.70:FF:000018">
    <property type="entry name" value="Probable transaldolase"/>
    <property type="match status" value="1"/>
</dbReference>
<dbReference type="Gene3D" id="3.20.20.70">
    <property type="entry name" value="Aldolase class I"/>
    <property type="match status" value="1"/>
</dbReference>
<dbReference type="HAMAP" id="MF_00494">
    <property type="entry name" value="Transaldolase_3b"/>
    <property type="match status" value="1"/>
</dbReference>
<dbReference type="InterPro" id="IPR013785">
    <property type="entry name" value="Aldolase_TIM"/>
</dbReference>
<dbReference type="InterPro" id="IPR001585">
    <property type="entry name" value="TAL/FSA"/>
</dbReference>
<dbReference type="InterPro" id="IPR022999">
    <property type="entry name" value="Transaldolase_3B"/>
</dbReference>
<dbReference type="InterPro" id="IPR004731">
    <property type="entry name" value="Transaldolase_3B/F6P_aldolase"/>
</dbReference>
<dbReference type="InterPro" id="IPR018225">
    <property type="entry name" value="Transaldolase_AS"/>
</dbReference>
<dbReference type="InterPro" id="IPR033919">
    <property type="entry name" value="TSA/FSA_arc/bac"/>
</dbReference>
<dbReference type="NCBIfam" id="TIGR00875">
    <property type="entry name" value="fsa_talC_mipB"/>
    <property type="match status" value="1"/>
</dbReference>
<dbReference type="PANTHER" id="PTHR10683:SF40">
    <property type="entry name" value="FRUCTOSE-6-PHOSPHATE ALDOLASE 1-RELATED"/>
    <property type="match status" value="1"/>
</dbReference>
<dbReference type="PANTHER" id="PTHR10683">
    <property type="entry name" value="TRANSALDOLASE"/>
    <property type="match status" value="1"/>
</dbReference>
<dbReference type="Pfam" id="PF00923">
    <property type="entry name" value="TAL_FSA"/>
    <property type="match status" value="1"/>
</dbReference>
<dbReference type="SUPFAM" id="SSF51569">
    <property type="entry name" value="Aldolase"/>
    <property type="match status" value="1"/>
</dbReference>
<dbReference type="PROSITE" id="PS01054">
    <property type="entry name" value="TRANSALDOLASE_1"/>
    <property type="match status" value="1"/>
</dbReference>
<gene>
    <name evidence="1" type="primary">tal</name>
    <name type="ordered locus">Plut_2088</name>
</gene>
<proteinExistence type="inferred from homology"/>
<sequence>MKFFIDTANLDEIRAAESLGVLDGVTTNPSLIAKIVEDPASFTRKDFMDHIKRICEIVDGPVNAEVTTLDAASMVREGEELAAIHNNVVVKCPLTIDGLKAIRSLSEKGIRTNATLVFSPNQALLAAKAGAGYVSPFVGRLDDISTDGMALVGQIVEIYDNYGLMTEVIVASIRHPQHVVESALIGADIATIPYSVIRQLANHPLTDAGLKKFMEDAAVIKK</sequence>
<keyword id="KW-0963">Cytoplasm</keyword>
<keyword id="KW-0570">Pentose shunt</keyword>
<keyword id="KW-1185">Reference proteome</keyword>
<keyword id="KW-0704">Schiff base</keyword>
<keyword id="KW-0808">Transferase</keyword>
<comment type="function">
    <text evidence="1">Transaldolase is important for the balance of metabolites in the pentose-phosphate pathway.</text>
</comment>
<comment type="catalytic activity">
    <reaction evidence="1">
        <text>D-sedoheptulose 7-phosphate + D-glyceraldehyde 3-phosphate = D-erythrose 4-phosphate + beta-D-fructose 6-phosphate</text>
        <dbReference type="Rhea" id="RHEA:17053"/>
        <dbReference type="ChEBI" id="CHEBI:16897"/>
        <dbReference type="ChEBI" id="CHEBI:57483"/>
        <dbReference type="ChEBI" id="CHEBI:57634"/>
        <dbReference type="ChEBI" id="CHEBI:59776"/>
        <dbReference type="EC" id="2.2.1.2"/>
    </reaction>
</comment>
<comment type="pathway">
    <text evidence="1">Carbohydrate degradation; pentose phosphate pathway; D-glyceraldehyde 3-phosphate and beta-D-fructose 6-phosphate from D-ribose 5-phosphate and D-xylulose 5-phosphate (non-oxidative stage): step 2/3.</text>
</comment>
<comment type="subcellular location">
    <subcellularLocation>
        <location evidence="1">Cytoplasm</location>
    </subcellularLocation>
</comment>
<comment type="similarity">
    <text evidence="1">Belongs to the transaldolase family. Type 3B subfamily.</text>
</comment>
<protein>
    <recommendedName>
        <fullName evidence="1">Probable transaldolase</fullName>
        <ecNumber evidence="1">2.2.1.2</ecNumber>
    </recommendedName>
</protein>